<comment type="function">
    <text evidence="1">F(1)F(0) ATP synthase produces ATP from ADP in the presence of a proton or sodium gradient. F-type ATPases consist of two structural domains, F(1) containing the extramembraneous catalytic core and F(0) containing the membrane proton channel, linked together by a central stalk and a peripheral stalk. During catalysis, ATP synthesis in the catalytic domain of F(1) is coupled via a rotary mechanism of the central stalk subunits to proton translocation.</text>
</comment>
<comment type="function">
    <text evidence="1">Component of the F(0) channel, it forms part of the peripheral stalk, linking F(1) to F(0).</text>
</comment>
<comment type="subunit">
    <text evidence="1">F-type ATPases have 2 components, F(1) - the catalytic core - and F(0) - the membrane proton channel. F(1) has five subunits: alpha(3), beta(3), gamma(1), delta(1), epsilon(1). F(0) has three main subunits: a(1), b(2) and c(10-14). The alpha and beta chains form an alternating ring which encloses part of the gamma chain. F(1) is attached to F(0) by a central stalk formed by the gamma and epsilon chains, while a peripheral stalk is formed by the delta and b chains.</text>
</comment>
<comment type="subcellular location">
    <subcellularLocation>
        <location evidence="1">Cell membrane</location>
        <topology evidence="1">Single-pass membrane protein</topology>
    </subcellularLocation>
</comment>
<comment type="similarity">
    <text evidence="1">Belongs to the ATPase B chain family.</text>
</comment>
<dbReference type="EMBL" id="CU179680">
    <property type="protein sequence ID" value="CAL59050.1"/>
    <property type="molecule type" value="Genomic_DNA"/>
</dbReference>
<dbReference type="RefSeq" id="WP_011949525.1">
    <property type="nucleotide sequence ID" value="NC_009497.1"/>
</dbReference>
<dbReference type="SMR" id="A5IYE1"/>
<dbReference type="STRING" id="347257.MAG3520"/>
<dbReference type="GeneID" id="93358110"/>
<dbReference type="KEGG" id="maa:MAG3520"/>
<dbReference type="HOGENOM" id="CLU_079215_4_3_14"/>
<dbReference type="Proteomes" id="UP000007065">
    <property type="component" value="Chromosome"/>
</dbReference>
<dbReference type="GO" id="GO:0005886">
    <property type="term" value="C:plasma membrane"/>
    <property type="evidence" value="ECO:0007669"/>
    <property type="project" value="UniProtKB-SubCell"/>
</dbReference>
<dbReference type="GO" id="GO:0045259">
    <property type="term" value="C:proton-transporting ATP synthase complex"/>
    <property type="evidence" value="ECO:0007669"/>
    <property type="project" value="UniProtKB-KW"/>
</dbReference>
<dbReference type="GO" id="GO:0046933">
    <property type="term" value="F:proton-transporting ATP synthase activity, rotational mechanism"/>
    <property type="evidence" value="ECO:0007669"/>
    <property type="project" value="UniProtKB-UniRule"/>
</dbReference>
<dbReference type="GO" id="GO:0046961">
    <property type="term" value="F:proton-transporting ATPase activity, rotational mechanism"/>
    <property type="evidence" value="ECO:0007669"/>
    <property type="project" value="TreeGrafter"/>
</dbReference>
<dbReference type="CDD" id="cd06503">
    <property type="entry name" value="ATP-synt_Fo_b"/>
    <property type="match status" value="1"/>
</dbReference>
<dbReference type="Gene3D" id="1.20.5.620">
    <property type="entry name" value="F1F0 ATP synthase subunit B, membrane domain"/>
    <property type="match status" value="1"/>
</dbReference>
<dbReference type="HAMAP" id="MF_01398">
    <property type="entry name" value="ATP_synth_b_bprime"/>
    <property type="match status" value="1"/>
</dbReference>
<dbReference type="InterPro" id="IPR028987">
    <property type="entry name" value="ATP_synth_B-like_membr_sf"/>
</dbReference>
<dbReference type="InterPro" id="IPR002146">
    <property type="entry name" value="ATP_synth_b/b'su_bac/chlpt"/>
</dbReference>
<dbReference type="InterPro" id="IPR005864">
    <property type="entry name" value="ATP_synth_F0_bsu_bac"/>
</dbReference>
<dbReference type="InterPro" id="IPR050059">
    <property type="entry name" value="ATP_synthase_B_chain"/>
</dbReference>
<dbReference type="NCBIfam" id="TIGR01144">
    <property type="entry name" value="ATP_synt_b"/>
    <property type="match status" value="1"/>
</dbReference>
<dbReference type="PANTHER" id="PTHR33445:SF1">
    <property type="entry name" value="ATP SYNTHASE SUBUNIT B"/>
    <property type="match status" value="1"/>
</dbReference>
<dbReference type="PANTHER" id="PTHR33445">
    <property type="entry name" value="ATP SYNTHASE SUBUNIT B', CHLOROPLASTIC"/>
    <property type="match status" value="1"/>
</dbReference>
<dbReference type="Pfam" id="PF00430">
    <property type="entry name" value="ATP-synt_B"/>
    <property type="match status" value="1"/>
</dbReference>
<dbReference type="SUPFAM" id="SSF81573">
    <property type="entry name" value="F1F0 ATP synthase subunit B, membrane domain"/>
    <property type="match status" value="1"/>
</dbReference>
<proteinExistence type="inferred from homology"/>
<sequence>MNLFYNLSLKANTLLSAQSGGIKDELKDKFKTLFPTWPMFLATLIAFILVVLILWFLLHKPIKKAMKARQDYIQKNIDEAKLTNDISKQKLNEANKRLAEAYSEADELIKNAKIHGESVIDEYTHKAKNKSKRIIEKAHMEIESERQKMVDDSKSNIAKAAIEISKKIMQKEVTKESQDEVIKNFLKDK</sequence>
<organism>
    <name type="scientific">Mycoplasmopsis agalactiae (strain NCTC 10123 / CIP 59.7 / PG2)</name>
    <name type="common">Mycoplasma agalactiae</name>
    <dbReference type="NCBI Taxonomy" id="347257"/>
    <lineage>
        <taxon>Bacteria</taxon>
        <taxon>Bacillati</taxon>
        <taxon>Mycoplasmatota</taxon>
        <taxon>Mycoplasmoidales</taxon>
        <taxon>Metamycoplasmataceae</taxon>
        <taxon>Mycoplasmopsis</taxon>
    </lineage>
</organism>
<name>ATPF_MYCAP</name>
<protein>
    <recommendedName>
        <fullName evidence="1">ATP synthase subunit b</fullName>
    </recommendedName>
    <alternativeName>
        <fullName evidence="1">ATP synthase F(0) sector subunit b</fullName>
    </alternativeName>
    <alternativeName>
        <fullName evidence="1">ATPase subunit I</fullName>
    </alternativeName>
    <alternativeName>
        <fullName evidence="1">F-type ATPase subunit b</fullName>
        <shortName evidence="1">F-ATPase subunit b</shortName>
    </alternativeName>
</protein>
<gene>
    <name evidence="1" type="primary">atpF</name>
    <name type="ordered locus">MAG3520</name>
</gene>
<feature type="chain" id="PRO_0000368606" description="ATP synthase subunit b">
    <location>
        <begin position="1"/>
        <end position="189"/>
    </location>
</feature>
<feature type="transmembrane region" description="Helical" evidence="1">
    <location>
        <begin position="38"/>
        <end position="58"/>
    </location>
</feature>
<reference key="1">
    <citation type="journal article" date="2007" name="PLoS Genet.">
        <title>Being pathogenic, plastic, and sexual while living with a nearly minimal bacterial genome.</title>
        <authorList>
            <person name="Sirand-Pugnet P."/>
            <person name="Lartigue C."/>
            <person name="Marenda M."/>
            <person name="Jacob D."/>
            <person name="Barre A."/>
            <person name="Barbe V."/>
            <person name="Schenowitz C."/>
            <person name="Mangenot S."/>
            <person name="Couloux A."/>
            <person name="Segurens B."/>
            <person name="de Daruvar A."/>
            <person name="Blanchard A."/>
            <person name="Citti C."/>
        </authorList>
    </citation>
    <scope>NUCLEOTIDE SEQUENCE [LARGE SCALE GENOMIC DNA]</scope>
    <source>
        <strain>NCTC 10123 / CIP 59.7 / PG2</strain>
    </source>
</reference>
<evidence type="ECO:0000255" key="1">
    <source>
        <dbReference type="HAMAP-Rule" id="MF_01398"/>
    </source>
</evidence>
<keyword id="KW-0066">ATP synthesis</keyword>
<keyword id="KW-1003">Cell membrane</keyword>
<keyword id="KW-0138">CF(0)</keyword>
<keyword id="KW-0375">Hydrogen ion transport</keyword>
<keyword id="KW-0406">Ion transport</keyword>
<keyword id="KW-0472">Membrane</keyword>
<keyword id="KW-1185">Reference proteome</keyword>
<keyword id="KW-0812">Transmembrane</keyword>
<keyword id="KW-1133">Transmembrane helix</keyword>
<keyword id="KW-0813">Transport</keyword>
<accession>A5IYE1</accession>